<name>GCH1L_BUCAI</name>
<reference key="1">
    <citation type="journal article" date="2000" name="Nature">
        <title>Genome sequence of the endocellular bacterial symbiont of aphids Buchnera sp. APS.</title>
        <authorList>
            <person name="Shigenobu S."/>
            <person name="Watanabe H."/>
            <person name="Hattori M."/>
            <person name="Sakaki Y."/>
            <person name="Ishikawa H."/>
        </authorList>
    </citation>
    <scope>NUCLEOTIDE SEQUENCE [LARGE SCALE GENOMIC DNA]</scope>
    <source>
        <strain>APS</strain>
    </source>
</reference>
<proteinExistence type="inferred from homology"/>
<keyword id="KW-0479">Metal-binding</keyword>
<keyword id="KW-1185">Reference proteome</keyword>
<dbReference type="EMBL" id="BA000003">
    <property type="protein sequence ID" value="BAB13010.1"/>
    <property type="molecule type" value="Genomic_DNA"/>
</dbReference>
<dbReference type="RefSeq" id="NP_240124.1">
    <property type="nucleotide sequence ID" value="NC_002528.1"/>
</dbReference>
<dbReference type="RefSeq" id="WP_009874254.1">
    <property type="nucleotide sequence ID" value="NZ_AP036055.1"/>
</dbReference>
<dbReference type="SMR" id="P57387"/>
<dbReference type="STRING" id="563178.BUAP5A_295"/>
<dbReference type="EnsemblBacteria" id="BAB13010">
    <property type="protein sequence ID" value="BAB13010"/>
    <property type="gene ID" value="BAB13010"/>
</dbReference>
<dbReference type="KEGG" id="buc:BU301"/>
<dbReference type="PATRIC" id="fig|107806.10.peg.312"/>
<dbReference type="eggNOG" id="COG0327">
    <property type="taxonomic scope" value="Bacteria"/>
</dbReference>
<dbReference type="HOGENOM" id="CLU_037423_3_0_6"/>
<dbReference type="BioCyc" id="BAPH107806:GBZJ-295-MONOMER"/>
<dbReference type="Proteomes" id="UP000001806">
    <property type="component" value="Chromosome"/>
</dbReference>
<dbReference type="GO" id="GO:0005737">
    <property type="term" value="C:cytoplasm"/>
    <property type="evidence" value="ECO:0007669"/>
    <property type="project" value="TreeGrafter"/>
</dbReference>
<dbReference type="GO" id="GO:0046872">
    <property type="term" value="F:metal ion binding"/>
    <property type="evidence" value="ECO:0007669"/>
    <property type="project" value="UniProtKB-KW"/>
</dbReference>
<dbReference type="FunFam" id="3.40.1390.30:FF:000002">
    <property type="entry name" value="Nif3-like dinuclear metal center protein"/>
    <property type="match status" value="1"/>
</dbReference>
<dbReference type="Gene3D" id="3.40.1390.30">
    <property type="entry name" value="NIF3 (NGG1p interacting factor 3)-like"/>
    <property type="match status" value="2"/>
</dbReference>
<dbReference type="InterPro" id="IPR002678">
    <property type="entry name" value="DUF34/NIF3"/>
</dbReference>
<dbReference type="InterPro" id="IPR036069">
    <property type="entry name" value="DUF34/NIF3_sf"/>
</dbReference>
<dbReference type="NCBIfam" id="TIGR00486">
    <property type="entry name" value="YbgI_SA1388"/>
    <property type="match status" value="1"/>
</dbReference>
<dbReference type="PANTHER" id="PTHR13799:SF14">
    <property type="entry name" value="GTP CYCLOHYDROLASE 1 TYPE 2 HOMOLOG"/>
    <property type="match status" value="1"/>
</dbReference>
<dbReference type="PANTHER" id="PTHR13799">
    <property type="entry name" value="NGG1 INTERACTING FACTOR 3"/>
    <property type="match status" value="1"/>
</dbReference>
<dbReference type="Pfam" id="PF01784">
    <property type="entry name" value="DUF34_NIF3"/>
    <property type="match status" value="1"/>
</dbReference>
<dbReference type="SUPFAM" id="SSF102705">
    <property type="entry name" value="NIF3 (NGG1p interacting factor 3)-like"/>
    <property type="match status" value="1"/>
</dbReference>
<comment type="subunit">
    <text evidence="1">Homohexamer.</text>
</comment>
<comment type="similarity">
    <text evidence="2">Belongs to the GTP cyclohydrolase I type 2/NIF3 family.</text>
</comment>
<protein>
    <recommendedName>
        <fullName>GTP cyclohydrolase 1 type 2 homolog</fullName>
    </recommendedName>
</protein>
<organism>
    <name type="scientific">Buchnera aphidicola subsp. Acyrthosiphon pisum (strain APS)</name>
    <name type="common">Acyrthosiphon pisum symbiotic bacterium</name>
    <dbReference type="NCBI Taxonomy" id="107806"/>
    <lineage>
        <taxon>Bacteria</taxon>
        <taxon>Pseudomonadati</taxon>
        <taxon>Pseudomonadota</taxon>
        <taxon>Gammaproteobacteria</taxon>
        <taxon>Enterobacterales</taxon>
        <taxon>Erwiniaceae</taxon>
        <taxon>Buchnera</taxon>
    </lineage>
</organism>
<sequence>MNNFLLEDIINKKLLSNQYQDTVPNGLQIEGTEIVKKIITGVTACQALLDKALFYNADTLIVHHGYFWKNESKYIHNMQRQRLKTILSHNINLYSWHLPLDVHPKLGNNAQIAKKLNIDIQGSILPYVLWGTTKNKMTGFEFANKIERKFKKYPIHLYENAPLYISRVAWCSGRGQGFIKKACAFGIDAFLTGEISEETTHIAKELGIHFFSLGHHATEKDGVKSLGEWLQRKYDLCVDFIDIYNPA</sequence>
<evidence type="ECO:0000250" key="1">
    <source>
        <dbReference type="UniProtKB" id="P0AFP6"/>
    </source>
</evidence>
<evidence type="ECO:0000305" key="2"/>
<feature type="chain" id="PRO_0000147297" description="GTP cyclohydrolase 1 type 2 homolog">
    <location>
        <begin position="1"/>
        <end position="247"/>
    </location>
</feature>
<feature type="binding site" evidence="1">
    <location>
        <position position="63"/>
    </location>
    <ligand>
        <name>a divalent metal cation</name>
        <dbReference type="ChEBI" id="CHEBI:60240"/>
        <label>1</label>
    </ligand>
</feature>
<feature type="binding site" evidence="1">
    <location>
        <position position="64"/>
    </location>
    <ligand>
        <name>a divalent metal cation</name>
        <dbReference type="ChEBI" id="CHEBI:60240"/>
        <label>2</label>
    </ligand>
</feature>
<feature type="binding site" evidence="1">
    <location>
        <position position="101"/>
    </location>
    <ligand>
        <name>a divalent metal cation</name>
        <dbReference type="ChEBI" id="CHEBI:60240"/>
        <label>1</label>
    </ligand>
</feature>
<feature type="binding site" evidence="1">
    <location>
        <position position="215"/>
    </location>
    <ligand>
        <name>a divalent metal cation</name>
        <dbReference type="ChEBI" id="CHEBI:60240"/>
        <label>2</label>
    </ligand>
</feature>
<feature type="binding site" evidence="1">
    <location>
        <position position="219"/>
    </location>
    <ligand>
        <name>a divalent metal cation</name>
        <dbReference type="ChEBI" id="CHEBI:60240"/>
        <label>1</label>
    </ligand>
</feature>
<feature type="binding site" evidence="1">
    <location>
        <position position="219"/>
    </location>
    <ligand>
        <name>a divalent metal cation</name>
        <dbReference type="ChEBI" id="CHEBI:60240"/>
        <label>2</label>
    </ligand>
</feature>
<accession>P57387</accession>
<gene>
    <name type="ordered locus">BU301</name>
</gene>